<evidence type="ECO:0000255" key="1">
    <source>
        <dbReference type="HAMAP-Rule" id="MF_00362"/>
    </source>
</evidence>
<evidence type="ECO:0000305" key="2"/>
<comment type="function">
    <text evidence="1">Forms part of the ribosomal stalk, playing a central role in the interaction of the ribosome with GTP-bound translation factors.</text>
</comment>
<comment type="subunit">
    <text evidence="1">Part of the ribosomal stalk of the 50S ribosomal subunit. The N-terminus interacts with L11 and the large rRNA to form the base of the stalk. The C-terminus forms an elongated spine to which L12 dimers bind in a sequential fashion forming a multimeric L10(L12)X complex.</text>
</comment>
<comment type="similarity">
    <text evidence="1">Belongs to the universal ribosomal protein uL10 family.</text>
</comment>
<feature type="chain" id="PRO_1000120988" description="Large ribosomal subunit protein uL10">
    <location>
        <begin position="1"/>
        <end position="175"/>
    </location>
</feature>
<sequence>MDRAAKADLVASLNEVFSTTSLVVVAHYKGLTVADMQKLRRQMKQAGATVKVAKNRLANIALDGTNVASIKPLLKGPTLLAYSSDPVAAAKVAVDFAKGNDKLVILGGAMGATALNPDGVKALATLPSLDELRAKIVGLVQAPATKIAQVVNAPAAKLARVFGAYADTANKDEAA</sequence>
<keyword id="KW-0687">Ribonucleoprotein</keyword>
<keyword id="KW-0689">Ribosomal protein</keyword>
<keyword id="KW-0694">RNA-binding</keyword>
<keyword id="KW-0699">rRNA-binding</keyword>
<dbReference type="EMBL" id="CP000943">
    <property type="protein sequence ID" value="ACA14933.1"/>
    <property type="molecule type" value="Genomic_DNA"/>
</dbReference>
<dbReference type="RefSeq" id="WP_012330351.1">
    <property type="nucleotide sequence ID" value="NC_010511.1"/>
</dbReference>
<dbReference type="SMR" id="B0UHX8"/>
<dbReference type="STRING" id="426117.M446_0362"/>
<dbReference type="KEGG" id="met:M446_0362"/>
<dbReference type="eggNOG" id="COG0244">
    <property type="taxonomic scope" value="Bacteria"/>
</dbReference>
<dbReference type="HOGENOM" id="CLU_092227_0_0_5"/>
<dbReference type="GO" id="GO:0015934">
    <property type="term" value="C:large ribosomal subunit"/>
    <property type="evidence" value="ECO:0007669"/>
    <property type="project" value="InterPro"/>
</dbReference>
<dbReference type="GO" id="GO:0070180">
    <property type="term" value="F:large ribosomal subunit rRNA binding"/>
    <property type="evidence" value="ECO:0007669"/>
    <property type="project" value="UniProtKB-UniRule"/>
</dbReference>
<dbReference type="GO" id="GO:0003735">
    <property type="term" value="F:structural constituent of ribosome"/>
    <property type="evidence" value="ECO:0007669"/>
    <property type="project" value="InterPro"/>
</dbReference>
<dbReference type="GO" id="GO:0006412">
    <property type="term" value="P:translation"/>
    <property type="evidence" value="ECO:0007669"/>
    <property type="project" value="UniProtKB-UniRule"/>
</dbReference>
<dbReference type="CDD" id="cd05797">
    <property type="entry name" value="Ribosomal_L10"/>
    <property type="match status" value="1"/>
</dbReference>
<dbReference type="Gene3D" id="3.30.70.1730">
    <property type="match status" value="1"/>
</dbReference>
<dbReference type="Gene3D" id="6.10.250.290">
    <property type="match status" value="1"/>
</dbReference>
<dbReference type="HAMAP" id="MF_00362">
    <property type="entry name" value="Ribosomal_uL10"/>
    <property type="match status" value="1"/>
</dbReference>
<dbReference type="InterPro" id="IPR001790">
    <property type="entry name" value="Ribosomal_uL10"/>
</dbReference>
<dbReference type="InterPro" id="IPR043141">
    <property type="entry name" value="Ribosomal_uL10-like_sf"/>
</dbReference>
<dbReference type="InterPro" id="IPR022973">
    <property type="entry name" value="Ribosomal_uL10_bac"/>
</dbReference>
<dbReference type="InterPro" id="IPR047865">
    <property type="entry name" value="Ribosomal_uL10_bac_type"/>
</dbReference>
<dbReference type="InterPro" id="IPR002363">
    <property type="entry name" value="Ribosomal_uL10_CS_bac"/>
</dbReference>
<dbReference type="NCBIfam" id="NF000955">
    <property type="entry name" value="PRK00099.1-1"/>
    <property type="match status" value="1"/>
</dbReference>
<dbReference type="PANTHER" id="PTHR11560">
    <property type="entry name" value="39S RIBOSOMAL PROTEIN L10, MITOCHONDRIAL"/>
    <property type="match status" value="1"/>
</dbReference>
<dbReference type="Pfam" id="PF00466">
    <property type="entry name" value="Ribosomal_L10"/>
    <property type="match status" value="1"/>
</dbReference>
<dbReference type="SUPFAM" id="SSF160369">
    <property type="entry name" value="Ribosomal protein L10-like"/>
    <property type="match status" value="1"/>
</dbReference>
<dbReference type="PROSITE" id="PS01109">
    <property type="entry name" value="RIBOSOMAL_L10"/>
    <property type="match status" value="1"/>
</dbReference>
<accession>B0UHX8</accession>
<protein>
    <recommendedName>
        <fullName evidence="1">Large ribosomal subunit protein uL10</fullName>
    </recommendedName>
    <alternativeName>
        <fullName evidence="2">50S ribosomal protein L10</fullName>
    </alternativeName>
</protein>
<reference key="1">
    <citation type="submission" date="2008-02" db="EMBL/GenBank/DDBJ databases">
        <title>Complete sequence of chromosome of Methylobacterium sp. 4-46.</title>
        <authorList>
            <consortium name="US DOE Joint Genome Institute"/>
            <person name="Copeland A."/>
            <person name="Lucas S."/>
            <person name="Lapidus A."/>
            <person name="Glavina del Rio T."/>
            <person name="Dalin E."/>
            <person name="Tice H."/>
            <person name="Bruce D."/>
            <person name="Goodwin L."/>
            <person name="Pitluck S."/>
            <person name="Chertkov O."/>
            <person name="Brettin T."/>
            <person name="Detter J.C."/>
            <person name="Han C."/>
            <person name="Kuske C.R."/>
            <person name="Schmutz J."/>
            <person name="Larimer F."/>
            <person name="Land M."/>
            <person name="Hauser L."/>
            <person name="Kyrpides N."/>
            <person name="Ivanova N."/>
            <person name="Marx C.J."/>
            <person name="Richardson P."/>
        </authorList>
    </citation>
    <scope>NUCLEOTIDE SEQUENCE [LARGE SCALE GENOMIC DNA]</scope>
    <source>
        <strain>4-46</strain>
    </source>
</reference>
<name>RL10_METS4</name>
<organism>
    <name type="scientific">Methylobacterium sp. (strain 4-46)</name>
    <dbReference type="NCBI Taxonomy" id="426117"/>
    <lineage>
        <taxon>Bacteria</taxon>
        <taxon>Pseudomonadati</taxon>
        <taxon>Pseudomonadota</taxon>
        <taxon>Alphaproteobacteria</taxon>
        <taxon>Hyphomicrobiales</taxon>
        <taxon>Methylobacteriaceae</taxon>
        <taxon>Methylobacterium</taxon>
    </lineage>
</organism>
<gene>
    <name evidence="1" type="primary">rplJ</name>
    <name type="ordered locus">M446_0362</name>
</gene>
<proteinExistence type="inferred from homology"/>